<name>TRPA_BACCR</name>
<protein>
    <recommendedName>
        <fullName evidence="1">Tryptophan synthase alpha chain</fullName>
        <ecNumber evidence="1">4.2.1.20</ecNumber>
    </recommendedName>
</protein>
<feature type="chain" id="PRO_0000098734" description="Tryptophan synthase alpha chain">
    <location>
        <begin position="1"/>
        <end position="258"/>
    </location>
</feature>
<feature type="active site" description="Proton acceptor" evidence="1">
    <location>
        <position position="47"/>
    </location>
</feature>
<feature type="active site" description="Proton acceptor" evidence="1">
    <location>
        <position position="58"/>
    </location>
</feature>
<organism>
    <name type="scientific">Bacillus cereus (strain ATCC 14579 / DSM 31 / CCUG 7414 / JCM 2152 / NBRC 15305 / NCIMB 9373 / NCTC 2599 / NRRL B-3711)</name>
    <dbReference type="NCBI Taxonomy" id="226900"/>
    <lineage>
        <taxon>Bacteria</taxon>
        <taxon>Bacillati</taxon>
        <taxon>Bacillota</taxon>
        <taxon>Bacilli</taxon>
        <taxon>Bacillales</taxon>
        <taxon>Bacillaceae</taxon>
        <taxon>Bacillus</taxon>
        <taxon>Bacillus cereus group</taxon>
    </lineage>
</organism>
<evidence type="ECO:0000255" key="1">
    <source>
        <dbReference type="HAMAP-Rule" id="MF_00131"/>
    </source>
</evidence>
<comment type="function">
    <text evidence="1">The alpha subunit is responsible for the aldol cleavage of indoleglycerol phosphate to indole and glyceraldehyde 3-phosphate.</text>
</comment>
<comment type="catalytic activity">
    <reaction evidence="1">
        <text>(1S,2R)-1-C-(indol-3-yl)glycerol 3-phosphate + L-serine = D-glyceraldehyde 3-phosphate + L-tryptophan + H2O</text>
        <dbReference type="Rhea" id="RHEA:10532"/>
        <dbReference type="ChEBI" id="CHEBI:15377"/>
        <dbReference type="ChEBI" id="CHEBI:33384"/>
        <dbReference type="ChEBI" id="CHEBI:57912"/>
        <dbReference type="ChEBI" id="CHEBI:58866"/>
        <dbReference type="ChEBI" id="CHEBI:59776"/>
        <dbReference type="EC" id="4.2.1.20"/>
    </reaction>
</comment>
<comment type="pathway">
    <text evidence="1">Amino-acid biosynthesis; L-tryptophan biosynthesis; L-tryptophan from chorismate: step 5/5.</text>
</comment>
<comment type="subunit">
    <text evidence="1">Tetramer of two alpha and two beta chains.</text>
</comment>
<comment type="similarity">
    <text evidence="1">Belongs to the TrpA family.</text>
</comment>
<accession>Q81GG4</accession>
<keyword id="KW-0028">Amino-acid biosynthesis</keyword>
<keyword id="KW-0057">Aromatic amino acid biosynthesis</keyword>
<keyword id="KW-0456">Lyase</keyword>
<keyword id="KW-1185">Reference proteome</keyword>
<keyword id="KW-0822">Tryptophan biosynthesis</keyword>
<sequence>MGVEKIKAAFENGKKAFIPYVMGGDGGLEKLKERIRFLDEAGASIVEIGIPFSDPVADGPTIQRAGKRALDSGVTLKGIFQALAEVRKEVQMPFVLMTYLNPVLAFGKERFIENCIEAGVDGIIVPDLPYEEQNIIAPLLREVNIALIPLVTVTSPIERIEKITSESEGFVYAVTVAGVTGVRQNFKEEIHSYLEKVKSHVNLPVVAGFGISTKEHVEEMVTICDGVVVGSKVIELLENEKREEICELIYATKQKEEA</sequence>
<gene>
    <name evidence="1" type="primary">trpA</name>
    <name type="ordered locus">BC_1238</name>
</gene>
<proteinExistence type="inferred from homology"/>
<dbReference type="EC" id="4.2.1.20" evidence="1"/>
<dbReference type="EMBL" id="AE016877">
    <property type="protein sequence ID" value="AAP08223.1"/>
    <property type="molecule type" value="Genomic_DNA"/>
</dbReference>
<dbReference type="RefSeq" id="NP_831022.1">
    <property type="nucleotide sequence ID" value="NC_004722.1"/>
</dbReference>
<dbReference type="RefSeq" id="WP_000537825.1">
    <property type="nucleotide sequence ID" value="NZ_CP138336.1"/>
</dbReference>
<dbReference type="SMR" id="Q81GG4"/>
<dbReference type="STRING" id="226900.BC_1238"/>
<dbReference type="MetOSite" id="Q81GG4"/>
<dbReference type="KEGG" id="bce:BC1238"/>
<dbReference type="PATRIC" id="fig|226900.8.peg.1209"/>
<dbReference type="HOGENOM" id="CLU_016734_0_0_9"/>
<dbReference type="OrthoDB" id="9804578at2"/>
<dbReference type="UniPathway" id="UPA00035">
    <property type="reaction ID" value="UER00044"/>
</dbReference>
<dbReference type="Proteomes" id="UP000001417">
    <property type="component" value="Chromosome"/>
</dbReference>
<dbReference type="GO" id="GO:0005829">
    <property type="term" value="C:cytosol"/>
    <property type="evidence" value="ECO:0000318"/>
    <property type="project" value="GO_Central"/>
</dbReference>
<dbReference type="GO" id="GO:0004834">
    <property type="term" value="F:tryptophan synthase activity"/>
    <property type="evidence" value="ECO:0000318"/>
    <property type="project" value="GO_Central"/>
</dbReference>
<dbReference type="GO" id="GO:0000162">
    <property type="term" value="P:L-tryptophan biosynthetic process"/>
    <property type="evidence" value="ECO:0000318"/>
    <property type="project" value="GO_Central"/>
</dbReference>
<dbReference type="CDD" id="cd04724">
    <property type="entry name" value="Tryptophan_synthase_alpha"/>
    <property type="match status" value="1"/>
</dbReference>
<dbReference type="FunFam" id="3.20.20.70:FF:000037">
    <property type="entry name" value="Tryptophan synthase alpha chain"/>
    <property type="match status" value="1"/>
</dbReference>
<dbReference type="Gene3D" id="3.20.20.70">
    <property type="entry name" value="Aldolase class I"/>
    <property type="match status" value="1"/>
</dbReference>
<dbReference type="HAMAP" id="MF_00131">
    <property type="entry name" value="Trp_synth_alpha"/>
    <property type="match status" value="1"/>
</dbReference>
<dbReference type="InterPro" id="IPR013785">
    <property type="entry name" value="Aldolase_TIM"/>
</dbReference>
<dbReference type="InterPro" id="IPR011060">
    <property type="entry name" value="RibuloseP-bd_barrel"/>
</dbReference>
<dbReference type="InterPro" id="IPR018204">
    <property type="entry name" value="Trp_synthase_alpha_AS"/>
</dbReference>
<dbReference type="InterPro" id="IPR002028">
    <property type="entry name" value="Trp_synthase_suA"/>
</dbReference>
<dbReference type="NCBIfam" id="TIGR00262">
    <property type="entry name" value="trpA"/>
    <property type="match status" value="1"/>
</dbReference>
<dbReference type="PANTHER" id="PTHR43406:SF1">
    <property type="entry name" value="TRYPTOPHAN SYNTHASE ALPHA CHAIN, CHLOROPLASTIC"/>
    <property type="match status" value="1"/>
</dbReference>
<dbReference type="PANTHER" id="PTHR43406">
    <property type="entry name" value="TRYPTOPHAN SYNTHASE, ALPHA CHAIN"/>
    <property type="match status" value="1"/>
</dbReference>
<dbReference type="Pfam" id="PF00290">
    <property type="entry name" value="Trp_syntA"/>
    <property type="match status" value="1"/>
</dbReference>
<dbReference type="SUPFAM" id="SSF51366">
    <property type="entry name" value="Ribulose-phoshate binding barrel"/>
    <property type="match status" value="1"/>
</dbReference>
<dbReference type="PROSITE" id="PS00167">
    <property type="entry name" value="TRP_SYNTHASE_ALPHA"/>
    <property type="match status" value="1"/>
</dbReference>
<reference key="1">
    <citation type="journal article" date="2003" name="Nature">
        <title>Genome sequence of Bacillus cereus and comparative analysis with Bacillus anthracis.</title>
        <authorList>
            <person name="Ivanova N."/>
            <person name="Sorokin A."/>
            <person name="Anderson I."/>
            <person name="Galleron N."/>
            <person name="Candelon B."/>
            <person name="Kapatral V."/>
            <person name="Bhattacharyya A."/>
            <person name="Reznik G."/>
            <person name="Mikhailova N."/>
            <person name="Lapidus A."/>
            <person name="Chu L."/>
            <person name="Mazur M."/>
            <person name="Goltsman E."/>
            <person name="Larsen N."/>
            <person name="D'Souza M."/>
            <person name="Walunas T."/>
            <person name="Grechkin Y."/>
            <person name="Pusch G."/>
            <person name="Haselkorn R."/>
            <person name="Fonstein M."/>
            <person name="Ehrlich S.D."/>
            <person name="Overbeek R."/>
            <person name="Kyrpides N.C."/>
        </authorList>
    </citation>
    <scope>NUCLEOTIDE SEQUENCE [LARGE SCALE GENOMIC DNA]</scope>
    <source>
        <strain>ATCC 14579 / DSM 31 / CCUG 7414 / JCM 2152 / NBRC 15305 / NCIMB 9373 / NCTC 2599 / NRRL B-3711</strain>
    </source>
</reference>